<dbReference type="EC" id="4.1.3.27"/>
<dbReference type="EMBL" id="M87483">
    <property type="protein sequence ID" value="AAA25223.1"/>
    <property type="molecule type" value="Genomic_DNA"/>
</dbReference>
<dbReference type="EMBL" id="AE005176">
    <property type="protein sequence ID" value="AAK05568.1"/>
    <property type="molecule type" value="Genomic_DNA"/>
</dbReference>
<dbReference type="PIR" id="F86808">
    <property type="entry name" value="F86808"/>
</dbReference>
<dbReference type="PIR" id="S35124">
    <property type="entry name" value="S35124"/>
</dbReference>
<dbReference type="RefSeq" id="NP_267626.1">
    <property type="nucleotide sequence ID" value="NC_002662.1"/>
</dbReference>
<dbReference type="RefSeq" id="WP_003130425.1">
    <property type="nucleotide sequence ID" value="NC_002662.1"/>
</dbReference>
<dbReference type="SMR" id="Q02001"/>
<dbReference type="PaxDb" id="272623-L0054"/>
<dbReference type="EnsemblBacteria" id="AAK05568">
    <property type="protein sequence ID" value="AAK05568"/>
    <property type="gene ID" value="L0054"/>
</dbReference>
<dbReference type="KEGG" id="lla:L0054"/>
<dbReference type="PATRIC" id="fig|272623.7.peg.1580"/>
<dbReference type="eggNOG" id="COG0147">
    <property type="taxonomic scope" value="Bacteria"/>
</dbReference>
<dbReference type="HOGENOM" id="CLU_006493_9_3_9"/>
<dbReference type="OrthoDB" id="9803598at2"/>
<dbReference type="UniPathway" id="UPA00035">
    <property type="reaction ID" value="UER00040"/>
</dbReference>
<dbReference type="Proteomes" id="UP000002196">
    <property type="component" value="Chromosome"/>
</dbReference>
<dbReference type="GO" id="GO:0004049">
    <property type="term" value="F:anthranilate synthase activity"/>
    <property type="evidence" value="ECO:0007669"/>
    <property type="project" value="UniProtKB-EC"/>
</dbReference>
<dbReference type="GO" id="GO:0046872">
    <property type="term" value="F:metal ion binding"/>
    <property type="evidence" value="ECO:0007669"/>
    <property type="project" value="UniProtKB-KW"/>
</dbReference>
<dbReference type="GO" id="GO:0000162">
    <property type="term" value="P:L-tryptophan biosynthetic process"/>
    <property type="evidence" value="ECO:0007669"/>
    <property type="project" value="UniProtKB-UniPathway"/>
</dbReference>
<dbReference type="Gene3D" id="3.60.120.10">
    <property type="entry name" value="Anthranilate synthase"/>
    <property type="match status" value="1"/>
</dbReference>
<dbReference type="InterPro" id="IPR005801">
    <property type="entry name" value="ADC_synthase"/>
</dbReference>
<dbReference type="InterPro" id="IPR019999">
    <property type="entry name" value="Anth_synth_I-like"/>
</dbReference>
<dbReference type="InterPro" id="IPR006805">
    <property type="entry name" value="Anth_synth_I_N"/>
</dbReference>
<dbReference type="InterPro" id="IPR005256">
    <property type="entry name" value="Anth_synth_I_PabB"/>
</dbReference>
<dbReference type="InterPro" id="IPR015890">
    <property type="entry name" value="Chorismate_C"/>
</dbReference>
<dbReference type="NCBIfam" id="TIGR00564">
    <property type="entry name" value="trpE_most"/>
    <property type="match status" value="1"/>
</dbReference>
<dbReference type="PANTHER" id="PTHR11236">
    <property type="entry name" value="AMINOBENZOATE/ANTHRANILATE SYNTHASE"/>
    <property type="match status" value="1"/>
</dbReference>
<dbReference type="PANTHER" id="PTHR11236:SF48">
    <property type="entry name" value="ISOCHORISMATE SYNTHASE MENF"/>
    <property type="match status" value="1"/>
</dbReference>
<dbReference type="Pfam" id="PF04715">
    <property type="entry name" value="Anth_synt_I_N"/>
    <property type="match status" value="1"/>
</dbReference>
<dbReference type="Pfam" id="PF00425">
    <property type="entry name" value="Chorismate_bind"/>
    <property type="match status" value="1"/>
</dbReference>
<dbReference type="PRINTS" id="PR00095">
    <property type="entry name" value="ANTSNTHASEI"/>
</dbReference>
<dbReference type="SUPFAM" id="SSF56322">
    <property type="entry name" value="ADC synthase"/>
    <property type="match status" value="1"/>
</dbReference>
<name>TRPE_LACLA</name>
<reference key="1">
    <citation type="journal article" date="1992" name="J. Bacteriol.">
        <title>Tryptophan biosynthesis genes in Lactococcus lactis subsp. lactis.</title>
        <authorList>
            <person name="Bardowski J."/>
            <person name="Ehrlich S.D."/>
            <person name="Chopin A."/>
        </authorList>
    </citation>
    <scope>NUCLEOTIDE SEQUENCE [GENOMIC DNA]</scope>
    <source>
        <strain>IL1403</strain>
    </source>
</reference>
<reference key="2">
    <citation type="journal article" date="2001" name="Genome Res.">
        <title>The complete genome sequence of the lactic acid bacterium Lactococcus lactis ssp. lactis IL1403.</title>
        <authorList>
            <person name="Bolotin A."/>
            <person name="Wincker P."/>
            <person name="Mauger S."/>
            <person name="Jaillon O."/>
            <person name="Malarme K."/>
            <person name="Weissenbach J."/>
            <person name="Ehrlich S.D."/>
            <person name="Sorokin A."/>
        </authorList>
    </citation>
    <scope>NUCLEOTIDE SEQUENCE [LARGE SCALE GENOMIC DNA]</scope>
    <source>
        <strain>IL1403</strain>
    </source>
</reference>
<feature type="chain" id="PRO_0000154096" description="Anthranilate synthase component 1">
    <location>
        <begin position="1"/>
        <end position="456"/>
    </location>
</feature>
<feature type="binding site" evidence="2">
    <location>
        <position position="31"/>
    </location>
    <ligand>
        <name>L-tryptophan</name>
        <dbReference type="ChEBI" id="CHEBI:57912"/>
    </ligand>
</feature>
<feature type="binding site" evidence="2">
    <location>
        <begin position="244"/>
        <end position="246"/>
    </location>
    <ligand>
        <name>L-tryptophan</name>
        <dbReference type="ChEBI" id="CHEBI:57912"/>
    </ligand>
</feature>
<feature type="binding site" evidence="2">
    <location>
        <begin position="279"/>
        <end position="280"/>
    </location>
    <ligand>
        <name>chorismate</name>
        <dbReference type="ChEBI" id="CHEBI:29748"/>
    </ligand>
</feature>
<feature type="binding site" evidence="2">
    <location>
        <position position="306"/>
    </location>
    <ligand>
        <name>Mg(2+)</name>
        <dbReference type="ChEBI" id="CHEBI:18420"/>
    </ligand>
</feature>
<feature type="binding site" evidence="2">
    <location>
        <position position="394"/>
    </location>
    <ligand>
        <name>chorismate</name>
        <dbReference type="ChEBI" id="CHEBI:29748"/>
    </ligand>
</feature>
<feature type="binding site" evidence="2">
    <location>
        <position position="414"/>
    </location>
    <ligand>
        <name>chorismate</name>
        <dbReference type="ChEBI" id="CHEBI:29748"/>
    </ligand>
</feature>
<feature type="binding site" evidence="2">
    <location>
        <begin position="428"/>
        <end position="430"/>
    </location>
    <ligand>
        <name>chorismate</name>
        <dbReference type="ChEBI" id="CHEBI:29748"/>
    </ligand>
</feature>
<feature type="binding site" evidence="2">
    <location>
        <position position="430"/>
    </location>
    <ligand>
        <name>chorismate</name>
        <dbReference type="ChEBI" id="CHEBI:29748"/>
    </ligand>
</feature>
<feature type="binding site" evidence="2">
    <location>
        <position position="443"/>
    </location>
    <ligand>
        <name>Mg(2+)</name>
        <dbReference type="ChEBI" id="CHEBI:18420"/>
    </ligand>
</feature>
<feature type="sequence conflict" description="In Ref. 1; AAA25223." evidence="3" ref="1">
    <original>SA</original>
    <variation>YR</variation>
    <location>
        <begin position="164"/>
        <end position="165"/>
    </location>
</feature>
<accession>Q02001</accession>
<organism>
    <name type="scientific">Lactococcus lactis subsp. lactis (strain IL1403)</name>
    <name type="common">Streptococcus lactis</name>
    <dbReference type="NCBI Taxonomy" id="272623"/>
    <lineage>
        <taxon>Bacteria</taxon>
        <taxon>Bacillati</taxon>
        <taxon>Bacillota</taxon>
        <taxon>Bacilli</taxon>
        <taxon>Lactobacillales</taxon>
        <taxon>Streptococcaceae</taxon>
        <taxon>Lactococcus</taxon>
    </lineage>
</organism>
<keyword id="KW-0028">Amino-acid biosynthesis</keyword>
<keyword id="KW-0057">Aromatic amino acid biosynthesis</keyword>
<keyword id="KW-0456">Lyase</keyword>
<keyword id="KW-0460">Magnesium</keyword>
<keyword id="KW-0479">Metal-binding</keyword>
<keyword id="KW-1185">Reference proteome</keyword>
<keyword id="KW-0822">Tryptophan biosynthesis</keyword>
<proteinExistence type="inferred from homology"/>
<evidence type="ECO:0000250" key="1"/>
<evidence type="ECO:0000250" key="2">
    <source>
        <dbReference type="UniProtKB" id="P00897"/>
    </source>
</evidence>
<evidence type="ECO:0000305" key="3"/>
<gene>
    <name type="primary">trpE</name>
    <name type="ordered locus">LL1470</name>
    <name type="ORF">L0054</name>
</gene>
<sequence>MRKIKEISADTMTPISVYLRLKGKNKVILESIPRENDQSRFSIIALNPVKHIKFTDGILSVNDEIISDENPMEFLEKLVCQPESTDENLDLPFTSGAIGYAGFDTYGIFEGIQPELKDSIGTPDMYFMLYESALIFDHKREKLIFIEDNTYSQRSEKELQNALSANIESLSLLTEAENELTELSKLNFVSNMSQELFEEKVAKAKELIRNGDMFQVVLSQRLTADFTDNPFNYYRKLRVENPSSYMYFMEFDNFHVIGSSPERLVAVHGNQVSTNPIAGTRKRGQTEFEDQALIEDLESDPKEVAEHKMLVDLGRNDIGKISKYGSIEVPVFMKVEKYRYVMHITSEVTGELRPEFTAMDALRATLPAGTLSGAPKHRAYQRIYEFETQKRGIYGGAIGYLTKNGNCDFAIAIRTMVLKDKKAHVQAGAGIVYDSVPEHEYQETLNKAQGLLKVGQ</sequence>
<protein>
    <recommendedName>
        <fullName>Anthranilate synthase component 1</fullName>
        <shortName>AS</shortName>
        <shortName>ASI</shortName>
        <ecNumber>4.1.3.27</ecNumber>
    </recommendedName>
</protein>
<comment type="function">
    <text evidence="1">Part of a heterotetrameric complex that catalyzes the two-step biosynthesis of anthranilate, an intermediate in the biosynthesis of L-tryptophan. In the first step, the glutamine-binding beta subunit (TrpG) of anthranilate synthase (AS) provides the glutamine amidotransferase activity which generates ammonia as a substrate that, along with chorismate, is used in the second step, catalyzed by the large alpha subunit of AS (TrpE) to produce anthranilate. In the absence of TrpG, TrpE can synthesize anthranilate directly from chorismate and high concentrations of ammonia (By similarity).</text>
</comment>
<comment type="catalytic activity">
    <reaction>
        <text>chorismate + L-glutamine = anthranilate + pyruvate + L-glutamate + H(+)</text>
        <dbReference type="Rhea" id="RHEA:21732"/>
        <dbReference type="ChEBI" id="CHEBI:15361"/>
        <dbReference type="ChEBI" id="CHEBI:15378"/>
        <dbReference type="ChEBI" id="CHEBI:16567"/>
        <dbReference type="ChEBI" id="CHEBI:29748"/>
        <dbReference type="ChEBI" id="CHEBI:29985"/>
        <dbReference type="ChEBI" id="CHEBI:58359"/>
        <dbReference type="EC" id="4.1.3.27"/>
    </reaction>
</comment>
<comment type="cofactor">
    <cofactor evidence="2">
        <name>Mg(2+)</name>
        <dbReference type="ChEBI" id="CHEBI:18420"/>
    </cofactor>
    <text evidence="2">Binds 1 Mg(2+) ion per subunit.</text>
</comment>
<comment type="activity regulation">
    <text evidence="1">Feedback inhibited by tryptophan.</text>
</comment>
<comment type="pathway">
    <text>Amino-acid biosynthesis; L-tryptophan biosynthesis; L-tryptophan from chorismate: step 1/5.</text>
</comment>
<comment type="subunit">
    <text evidence="1">Heterotetramer consisting of two non-identical subunits: a beta subunit (TrpG) and a large alpha subunit (TrpE).</text>
</comment>
<comment type="similarity">
    <text evidence="3">Belongs to the anthranilate synthase component I family.</text>
</comment>